<evidence type="ECO:0000255" key="1">
    <source>
        <dbReference type="HAMAP-Rule" id="MF_00124"/>
    </source>
</evidence>
<gene>
    <name evidence="1" type="primary">tdk</name>
    <name type="ordered locus">BCAH820_5422</name>
</gene>
<protein>
    <recommendedName>
        <fullName evidence="1">Thymidine kinase</fullName>
        <ecNumber evidence="1">2.7.1.21</ecNumber>
    </recommendedName>
</protein>
<comment type="catalytic activity">
    <reaction evidence="1">
        <text>thymidine + ATP = dTMP + ADP + H(+)</text>
        <dbReference type="Rhea" id="RHEA:19129"/>
        <dbReference type="ChEBI" id="CHEBI:15378"/>
        <dbReference type="ChEBI" id="CHEBI:17748"/>
        <dbReference type="ChEBI" id="CHEBI:30616"/>
        <dbReference type="ChEBI" id="CHEBI:63528"/>
        <dbReference type="ChEBI" id="CHEBI:456216"/>
        <dbReference type="EC" id="2.7.1.21"/>
    </reaction>
</comment>
<comment type="subunit">
    <text evidence="1">Homotetramer.</text>
</comment>
<comment type="subcellular location">
    <subcellularLocation>
        <location evidence="1">Cytoplasm</location>
    </subcellularLocation>
</comment>
<comment type="similarity">
    <text evidence="1">Belongs to the thymidine kinase family.</text>
</comment>
<accession>B7JHF2</accession>
<reference key="1">
    <citation type="submission" date="2008-10" db="EMBL/GenBank/DDBJ databases">
        <title>Genome sequence of Bacillus cereus AH820.</title>
        <authorList>
            <person name="Dodson R.J."/>
            <person name="Durkin A.S."/>
            <person name="Rosovitz M.J."/>
            <person name="Rasko D.A."/>
            <person name="Hoffmaster A."/>
            <person name="Ravel J."/>
            <person name="Sutton G."/>
        </authorList>
    </citation>
    <scope>NUCLEOTIDE SEQUENCE [LARGE SCALE GENOMIC DNA]</scope>
    <source>
        <strain>AH820</strain>
    </source>
</reference>
<sequence>MYLINQNGWIEVICGSMFSGKSEELIRRVRRTQFAKQHAIVFKPCIDNRYSEEDVVSHNGLKVKAVPVSASKDIFEHITEEMDVIAIDEVQFFDGDIVEVVQVLANRGYRVIVAGLDQDFRGLPFGQVPQLMAIAEHVTKLQAVCSACGSPASRTQRLIDGEPAAFDDPIILVGASESYEPRCRHCHAVPTKQR</sequence>
<feature type="chain" id="PRO_1000117662" description="Thymidine kinase">
    <location>
        <begin position="1"/>
        <end position="194"/>
    </location>
</feature>
<feature type="active site" description="Proton acceptor" evidence="1">
    <location>
        <position position="89"/>
    </location>
</feature>
<feature type="binding site" evidence="1">
    <location>
        <begin position="15"/>
        <end position="22"/>
    </location>
    <ligand>
        <name>ATP</name>
        <dbReference type="ChEBI" id="CHEBI:30616"/>
    </ligand>
</feature>
<feature type="binding site" evidence="1">
    <location>
        <begin position="88"/>
        <end position="91"/>
    </location>
    <ligand>
        <name>ATP</name>
        <dbReference type="ChEBI" id="CHEBI:30616"/>
    </ligand>
</feature>
<feature type="binding site" evidence="1">
    <location>
        <position position="145"/>
    </location>
    <ligand>
        <name>Zn(2+)</name>
        <dbReference type="ChEBI" id="CHEBI:29105"/>
    </ligand>
</feature>
<feature type="binding site" evidence="1">
    <location>
        <position position="148"/>
    </location>
    <ligand>
        <name>Zn(2+)</name>
        <dbReference type="ChEBI" id="CHEBI:29105"/>
    </ligand>
</feature>
<feature type="binding site" evidence="1">
    <location>
        <position position="183"/>
    </location>
    <ligand>
        <name>Zn(2+)</name>
        <dbReference type="ChEBI" id="CHEBI:29105"/>
    </ligand>
</feature>
<feature type="binding site" evidence="1">
    <location>
        <position position="186"/>
    </location>
    <ligand>
        <name>Zn(2+)</name>
        <dbReference type="ChEBI" id="CHEBI:29105"/>
    </ligand>
</feature>
<name>KITH_BACC0</name>
<organism>
    <name type="scientific">Bacillus cereus (strain AH820)</name>
    <dbReference type="NCBI Taxonomy" id="405535"/>
    <lineage>
        <taxon>Bacteria</taxon>
        <taxon>Bacillati</taxon>
        <taxon>Bacillota</taxon>
        <taxon>Bacilli</taxon>
        <taxon>Bacillales</taxon>
        <taxon>Bacillaceae</taxon>
        <taxon>Bacillus</taxon>
        <taxon>Bacillus cereus group</taxon>
    </lineage>
</organism>
<proteinExistence type="inferred from homology"/>
<keyword id="KW-0067">ATP-binding</keyword>
<keyword id="KW-0963">Cytoplasm</keyword>
<keyword id="KW-0237">DNA synthesis</keyword>
<keyword id="KW-0418">Kinase</keyword>
<keyword id="KW-0479">Metal-binding</keyword>
<keyword id="KW-0547">Nucleotide-binding</keyword>
<keyword id="KW-0808">Transferase</keyword>
<keyword id="KW-0862">Zinc</keyword>
<dbReference type="EC" id="2.7.1.21" evidence="1"/>
<dbReference type="EMBL" id="CP001283">
    <property type="protein sequence ID" value="ACK88619.1"/>
    <property type="molecule type" value="Genomic_DNA"/>
</dbReference>
<dbReference type="RefSeq" id="WP_000280861.1">
    <property type="nucleotide sequence ID" value="NC_011773.1"/>
</dbReference>
<dbReference type="SMR" id="B7JHF2"/>
<dbReference type="KEGG" id="bcu:BCAH820_5422"/>
<dbReference type="HOGENOM" id="CLU_064400_3_0_9"/>
<dbReference type="Proteomes" id="UP000001363">
    <property type="component" value="Chromosome"/>
</dbReference>
<dbReference type="GO" id="GO:0005829">
    <property type="term" value="C:cytosol"/>
    <property type="evidence" value="ECO:0007669"/>
    <property type="project" value="TreeGrafter"/>
</dbReference>
<dbReference type="GO" id="GO:0005524">
    <property type="term" value="F:ATP binding"/>
    <property type="evidence" value="ECO:0007669"/>
    <property type="project" value="UniProtKB-UniRule"/>
</dbReference>
<dbReference type="GO" id="GO:0004797">
    <property type="term" value="F:thymidine kinase activity"/>
    <property type="evidence" value="ECO:0007669"/>
    <property type="project" value="UniProtKB-UniRule"/>
</dbReference>
<dbReference type="GO" id="GO:0008270">
    <property type="term" value="F:zinc ion binding"/>
    <property type="evidence" value="ECO:0007669"/>
    <property type="project" value="UniProtKB-UniRule"/>
</dbReference>
<dbReference type="GO" id="GO:0071897">
    <property type="term" value="P:DNA biosynthetic process"/>
    <property type="evidence" value="ECO:0007669"/>
    <property type="project" value="UniProtKB-KW"/>
</dbReference>
<dbReference type="GO" id="GO:0046104">
    <property type="term" value="P:thymidine metabolic process"/>
    <property type="evidence" value="ECO:0007669"/>
    <property type="project" value="TreeGrafter"/>
</dbReference>
<dbReference type="FunFam" id="3.30.60.20:FF:000026">
    <property type="entry name" value="Thymidine kinase"/>
    <property type="match status" value="1"/>
</dbReference>
<dbReference type="FunFam" id="3.40.50.300:FF:000384">
    <property type="entry name" value="Thymidine kinase"/>
    <property type="match status" value="1"/>
</dbReference>
<dbReference type="Gene3D" id="3.30.60.20">
    <property type="match status" value="1"/>
</dbReference>
<dbReference type="Gene3D" id="3.40.50.300">
    <property type="entry name" value="P-loop containing nucleotide triphosphate hydrolases"/>
    <property type="match status" value="1"/>
</dbReference>
<dbReference type="HAMAP" id="MF_00124">
    <property type="entry name" value="Thymidine_kinase"/>
    <property type="match status" value="1"/>
</dbReference>
<dbReference type="InterPro" id="IPR027417">
    <property type="entry name" value="P-loop_NTPase"/>
</dbReference>
<dbReference type="InterPro" id="IPR001267">
    <property type="entry name" value="Thymidine_kinase"/>
</dbReference>
<dbReference type="InterPro" id="IPR020633">
    <property type="entry name" value="Thymidine_kinase_CS"/>
</dbReference>
<dbReference type="NCBIfam" id="NF003296">
    <property type="entry name" value="PRK04296.1-1"/>
    <property type="match status" value="1"/>
</dbReference>
<dbReference type="PANTHER" id="PTHR11441">
    <property type="entry name" value="THYMIDINE KINASE"/>
    <property type="match status" value="1"/>
</dbReference>
<dbReference type="PANTHER" id="PTHR11441:SF0">
    <property type="entry name" value="THYMIDINE KINASE, CYTOSOLIC"/>
    <property type="match status" value="1"/>
</dbReference>
<dbReference type="Pfam" id="PF00265">
    <property type="entry name" value="TK"/>
    <property type="match status" value="1"/>
</dbReference>
<dbReference type="PIRSF" id="PIRSF035805">
    <property type="entry name" value="TK_cell"/>
    <property type="match status" value="1"/>
</dbReference>
<dbReference type="SUPFAM" id="SSF57716">
    <property type="entry name" value="Glucocorticoid receptor-like (DNA-binding domain)"/>
    <property type="match status" value="1"/>
</dbReference>
<dbReference type="SUPFAM" id="SSF52540">
    <property type="entry name" value="P-loop containing nucleoside triphosphate hydrolases"/>
    <property type="match status" value="1"/>
</dbReference>
<dbReference type="PROSITE" id="PS00603">
    <property type="entry name" value="TK_CELLULAR_TYPE"/>
    <property type="match status" value="1"/>
</dbReference>